<accession>C8YJA2</accession>
<evidence type="ECO:0000255" key="1"/>
<evidence type="ECO:0000269" key="2">
    <source>
    </source>
</evidence>
<evidence type="ECO:0000303" key="3">
    <source>
    </source>
</evidence>
<evidence type="ECO:0000305" key="4"/>
<evidence type="ECO:0000305" key="5">
    <source>
    </source>
</evidence>
<evidence type="ECO:0000312" key="6">
    <source>
        <dbReference type="EMBL" id="ACS72297.1"/>
    </source>
</evidence>
<feature type="signal peptide" evidence="1 5">
    <location>
        <begin position="1"/>
        <end position="23"/>
    </location>
</feature>
<feature type="chain" id="PRO_5002994496" description="Tabinhibitin 7" evidence="5">
    <location>
        <begin position="24"/>
        <end position="255"/>
    </location>
</feature>
<feature type="domain" description="SCP" evidence="1">
    <location>
        <begin position="67"/>
        <end position="211"/>
    </location>
</feature>
<feature type="short sequence motif" description="Cell attachment site" evidence="5">
    <location>
        <begin position="32"/>
        <end position="34"/>
    </location>
</feature>
<keyword id="KW-1217">Cell adhesion impairing toxin</keyword>
<keyword id="KW-0903">Direct protein sequencing</keyword>
<keyword id="KW-1199">Hemostasis impairing toxin</keyword>
<keyword id="KW-1201">Platelet aggregation inhibiting toxin</keyword>
<keyword id="KW-0964">Secreted</keyword>
<keyword id="KW-0732">Signal</keyword>
<keyword id="KW-0800">Toxin</keyword>
<name>INH7_TABYA</name>
<protein>
    <recommendedName>
        <fullName evidence="3">Tabinhibitin 7</fullName>
    </recommendedName>
</protein>
<reference evidence="6" key="1">
    <citation type="journal article" date="2009" name="Mol. Cell. Proteomics">
        <title>Anti-thrombosis repertoire of blood-feeding horsefly salivary glands.</title>
        <authorList>
            <person name="Ma D."/>
            <person name="Wang Y."/>
            <person name="Yang H."/>
            <person name="Wu J."/>
            <person name="An S."/>
            <person name="Gao L."/>
            <person name="Xu X."/>
            <person name="Lai R."/>
        </authorList>
    </citation>
    <scope>NUCLEOTIDE SEQUENCE [MRNA]</scope>
    <scope>PROTEIN SEQUENCE OF 24-59; 106-116; 123-131; 187-201 AND 205-218</scope>
    <scope>SUBCELLULAR LOCATION</scope>
    <scope>FUNCTION</scope>
    <source>
        <tissue>Salivary gland</tissue>
    </source>
</reference>
<comment type="function">
    <text evidence="2">Inhibits platelet aggregation induced by all agonists tested (ADP, arachidonic acid, the thromboxane A2 analog U46619, thrombin, and snake venom snaclecs (TMVA that activates platelet through GPIB, and stejnulxin that specifically acts through GPVI (GP6))) (PubMed:19531497). May act by competing with fibrinogen for binding to glycoprotein IIb/IIIa (ITGA2B/ITGB3) (PubMed:19531497).</text>
</comment>
<comment type="subcellular location">
    <subcellularLocation>
        <location evidence="2">Secreted</location>
    </subcellularLocation>
</comment>
<comment type="tissue specificity">
    <text evidence="5">Expressed in salivary glands.</text>
</comment>
<comment type="similarity">
    <text evidence="4">Belongs to the CRISP family.</text>
</comment>
<organism>
    <name type="scientific">Tabanus yao</name>
    <name type="common">Horsefly</name>
    <dbReference type="NCBI Taxonomy" id="485572"/>
    <lineage>
        <taxon>Eukaryota</taxon>
        <taxon>Metazoa</taxon>
        <taxon>Ecdysozoa</taxon>
        <taxon>Arthropoda</taxon>
        <taxon>Hexapoda</taxon>
        <taxon>Insecta</taxon>
        <taxon>Pterygota</taxon>
        <taxon>Neoptera</taxon>
        <taxon>Endopterygota</taxon>
        <taxon>Diptera</taxon>
        <taxon>Brachycera</taxon>
        <taxon>Tabanomorpha</taxon>
        <taxon>Tabanoidea</taxon>
        <taxon>Tabanidae</taxon>
        <taxon>Tabanus</taxon>
    </lineage>
</organism>
<sequence>MTSILVSSFLLATLVLQYATIDAVDYCRLPCRGDNYHVGCREPAYAQECGQSPRTRELLKEHRNEILSKINDVRDHVAKGSWGLPVAARMKVVVWDAELAGLAKRHTKGCVGETLECRNTERLFSPGYLNFKYSGDKLPRIMELIDAAVKKGHLQKHNITREIIESYRDNGPDGNVKELALAISDRVTAVGCGLTTWQDGAKARALLTCNFSSQNIWGRPVYKVGNSPGEKCIEKDETYTNLCSATEPIDPNKSN</sequence>
<proteinExistence type="evidence at protein level"/>
<dbReference type="EMBL" id="FJ469609">
    <property type="protein sequence ID" value="ACS72297.1"/>
    <property type="molecule type" value="mRNA"/>
</dbReference>
<dbReference type="SMR" id="C8YJA2"/>
<dbReference type="GO" id="GO:0005576">
    <property type="term" value="C:extracellular region"/>
    <property type="evidence" value="ECO:0007669"/>
    <property type="project" value="UniProtKB-SubCell"/>
</dbReference>
<dbReference type="GO" id="GO:0090729">
    <property type="term" value="F:toxin activity"/>
    <property type="evidence" value="ECO:0007669"/>
    <property type="project" value="UniProtKB-KW"/>
</dbReference>
<dbReference type="CDD" id="cd05380">
    <property type="entry name" value="CAP_euk"/>
    <property type="match status" value="1"/>
</dbReference>
<dbReference type="Gene3D" id="3.40.33.10">
    <property type="entry name" value="CAP"/>
    <property type="match status" value="1"/>
</dbReference>
<dbReference type="InterPro" id="IPR014044">
    <property type="entry name" value="CAP_dom"/>
</dbReference>
<dbReference type="InterPro" id="IPR035940">
    <property type="entry name" value="CAP_sf"/>
</dbReference>
<dbReference type="InterPro" id="IPR034763">
    <property type="entry name" value="P14a_insect"/>
</dbReference>
<dbReference type="Pfam" id="PF00188">
    <property type="entry name" value="CAP"/>
    <property type="match status" value="1"/>
</dbReference>
<dbReference type="PIRSF" id="PIRSF038921">
    <property type="entry name" value="P14a"/>
    <property type="match status" value="1"/>
</dbReference>
<dbReference type="SMART" id="SM00198">
    <property type="entry name" value="SCP"/>
    <property type="match status" value="1"/>
</dbReference>
<dbReference type="SUPFAM" id="SSF55797">
    <property type="entry name" value="PR-1-like"/>
    <property type="match status" value="1"/>
</dbReference>